<reference key="1">
    <citation type="journal article" date="2001" name="Nat. Genet.">
        <title>Fusion of two novel genes, RBM15 and MKL1, in the t(1;22)(p13;q13) of acute megakaryoblastic leukemia.</title>
        <authorList>
            <person name="Ma Z."/>
            <person name="Morris S.W."/>
            <person name="Valentine V."/>
            <person name="Li M."/>
            <person name="Herbrick J.-A."/>
            <person name="Cui X."/>
            <person name="Bouman D."/>
            <person name="Li Y."/>
            <person name="Mehta P.K."/>
            <person name="Nizetic D."/>
            <person name="Kaneko Y."/>
            <person name="Chan G.C.F."/>
            <person name="Chan L.C."/>
            <person name="Squire J."/>
            <person name="Scherer S.W."/>
            <person name="Hitzler J.K."/>
        </authorList>
    </citation>
    <scope>NUCLEOTIDE SEQUENCE [MRNA] (ISOFORMS 1; 2 AND 3)</scope>
    <scope>CHROMOSOMAL TRANSLOCATION WITH MKL1</scope>
</reference>
<reference key="2">
    <citation type="journal article" date="2001" name="Proc. Natl. Acad. Sci. U.S.A.">
        <title>Involvement of a human gene related to the Drosophila spen gene in the recurrent t(1;22) translocation of acute megakaryocytic leukemia.</title>
        <authorList>
            <person name="Mercher T."/>
            <person name="Coniat M.B.-L."/>
            <person name="Monni R."/>
            <person name="Mauchauffe M."/>
            <person name="Khac F.N."/>
            <person name="Gressin L."/>
            <person name="Mugneret F."/>
            <person name="Leblanc T."/>
            <person name="Dastugue N."/>
            <person name="Berger R."/>
            <person name="Bernard O.A."/>
        </authorList>
    </citation>
    <scope>NUCLEOTIDE SEQUENCE [GENOMIC DNA / MRNA]</scope>
    <scope>FUNCTION</scope>
    <scope>CHROMOSOMAL TRANSLOCATION WITH MKL1</scope>
</reference>
<reference key="3">
    <citation type="submission" date="2005-07" db="EMBL/GenBank/DDBJ databases">
        <authorList>
            <person name="Mural R.J."/>
            <person name="Istrail S."/>
            <person name="Sutton G.G."/>
            <person name="Florea L."/>
            <person name="Halpern A.L."/>
            <person name="Mobarry C.M."/>
            <person name="Lippert R."/>
            <person name="Walenz B."/>
            <person name="Shatkay H."/>
            <person name="Dew I."/>
            <person name="Miller J.R."/>
            <person name="Flanigan M.J."/>
            <person name="Edwards N.J."/>
            <person name="Bolanos R."/>
            <person name="Fasulo D."/>
            <person name="Halldorsson B.V."/>
            <person name="Hannenhalli S."/>
            <person name="Turner R."/>
            <person name="Yooseph S."/>
            <person name="Lu F."/>
            <person name="Nusskern D.R."/>
            <person name="Shue B.C."/>
            <person name="Zheng X.H."/>
            <person name="Zhong F."/>
            <person name="Delcher A.L."/>
            <person name="Huson D.H."/>
            <person name="Kravitz S.A."/>
            <person name="Mouchard L."/>
            <person name="Reinert K."/>
            <person name="Remington K.A."/>
            <person name="Clark A.G."/>
            <person name="Waterman M.S."/>
            <person name="Eichler E.E."/>
            <person name="Adams M.D."/>
            <person name="Hunkapiller M.W."/>
            <person name="Myers E.W."/>
            <person name="Venter J.C."/>
        </authorList>
    </citation>
    <scope>NUCLEOTIDE SEQUENCE [LARGE SCALE GENOMIC DNA]</scope>
</reference>
<reference key="4">
    <citation type="journal article" date="2004" name="Nat. Genet.">
        <title>Complete sequencing and characterization of 21,243 full-length human cDNAs.</title>
        <authorList>
            <person name="Ota T."/>
            <person name="Suzuki Y."/>
            <person name="Nishikawa T."/>
            <person name="Otsuki T."/>
            <person name="Sugiyama T."/>
            <person name="Irie R."/>
            <person name="Wakamatsu A."/>
            <person name="Hayashi K."/>
            <person name="Sato H."/>
            <person name="Nagai K."/>
            <person name="Kimura K."/>
            <person name="Makita H."/>
            <person name="Sekine M."/>
            <person name="Obayashi M."/>
            <person name="Nishi T."/>
            <person name="Shibahara T."/>
            <person name="Tanaka T."/>
            <person name="Ishii S."/>
            <person name="Yamamoto J."/>
            <person name="Saito K."/>
            <person name="Kawai Y."/>
            <person name="Isono Y."/>
            <person name="Nakamura Y."/>
            <person name="Nagahari K."/>
            <person name="Murakami K."/>
            <person name="Yasuda T."/>
            <person name="Iwayanagi T."/>
            <person name="Wagatsuma M."/>
            <person name="Shiratori A."/>
            <person name="Sudo H."/>
            <person name="Hosoiri T."/>
            <person name="Kaku Y."/>
            <person name="Kodaira H."/>
            <person name="Kondo H."/>
            <person name="Sugawara M."/>
            <person name="Takahashi M."/>
            <person name="Kanda K."/>
            <person name="Yokoi T."/>
            <person name="Furuya T."/>
            <person name="Kikkawa E."/>
            <person name="Omura Y."/>
            <person name="Abe K."/>
            <person name="Kamihara K."/>
            <person name="Katsuta N."/>
            <person name="Sato K."/>
            <person name="Tanikawa M."/>
            <person name="Yamazaki M."/>
            <person name="Ninomiya K."/>
            <person name="Ishibashi T."/>
            <person name="Yamashita H."/>
            <person name="Murakawa K."/>
            <person name="Fujimori K."/>
            <person name="Tanai H."/>
            <person name="Kimata M."/>
            <person name="Watanabe M."/>
            <person name="Hiraoka S."/>
            <person name="Chiba Y."/>
            <person name="Ishida S."/>
            <person name="Ono Y."/>
            <person name="Takiguchi S."/>
            <person name="Watanabe S."/>
            <person name="Yosida M."/>
            <person name="Hotuta T."/>
            <person name="Kusano J."/>
            <person name="Kanehori K."/>
            <person name="Takahashi-Fujii A."/>
            <person name="Hara H."/>
            <person name="Tanase T.-O."/>
            <person name="Nomura Y."/>
            <person name="Togiya S."/>
            <person name="Komai F."/>
            <person name="Hara R."/>
            <person name="Takeuchi K."/>
            <person name="Arita M."/>
            <person name="Imose N."/>
            <person name="Musashino K."/>
            <person name="Yuuki H."/>
            <person name="Oshima A."/>
            <person name="Sasaki N."/>
            <person name="Aotsuka S."/>
            <person name="Yoshikawa Y."/>
            <person name="Matsunawa H."/>
            <person name="Ichihara T."/>
            <person name="Shiohata N."/>
            <person name="Sano S."/>
            <person name="Moriya S."/>
            <person name="Momiyama H."/>
            <person name="Satoh N."/>
            <person name="Takami S."/>
            <person name="Terashima Y."/>
            <person name="Suzuki O."/>
            <person name="Nakagawa S."/>
            <person name="Senoh A."/>
            <person name="Mizoguchi H."/>
            <person name="Goto Y."/>
            <person name="Shimizu F."/>
            <person name="Wakebe H."/>
            <person name="Hishigaki H."/>
            <person name="Watanabe T."/>
            <person name="Sugiyama A."/>
            <person name="Takemoto M."/>
            <person name="Kawakami B."/>
            <person name="Yamazaki M."/>
            <person name="Watanabe K."/>
            <person name="Kumagai A."/>
            <person name="Itakura S."/>
            <person name="Fukuzumi Y."/>
            <person name="Fujimori Y."/>
            <person name="Komiyama M."/>
            <person name="Tashiro H."/>
            <person name="Tanigami A."/>
            <person name="Fujiwara T."/>
            <person name="Ono T."/>
            <person name="Yamada K."/>
            <person name="Fujii Y."/>
            <person name="Ozaki K."/>
            <person name="Hirao M."/>
            <person name="Ohmori Y."/>
            <person name="Kawabata A."/>
            <person name="Hikiji T."/>
            <person name="Kobatake N."/>
            <person name="Inagaki H."/>
            <person name="Ikema Y."/>
            <person name="Okamoto S."/>
            <person name="Okitani R."/>
            <person name="Kawakami T."/>
            <person name="Noguchi S."/>
            <person name="Itoh T."/>
            <person name="Shigeta K."/>
            <person name="Senba T."/>
            <person name="Matsumura K."/>
            <person name="Nakajima Y."/>
            <person name="Mizuno T."/>
            <person name="Morinaga M."/>
            <person name="Sasaki M."/>
            <person name="Togashi T."/>
            <person name="Oyama M."/>
            <person name="Hata H."/>
            <person name="Watanabe M."/>
            <person name="Komatsu T."/>
            <person name="Mizushima-Sugano J."/>
            <person name="Satoh T."/>
            <person name="Shirai Y."/>
            <person name="Takahashi Y."/>
            <person name="Nakagawa K."/>
            <person name="Okumura K."/>
            <person name="Nagase T."/>
            <person name="Nomura N."/>
            <person name="Kikuchi H."/>
            <person name="Masuho Y."/>
            <person name="Yamashita R."/>
            <person name="Nakai K."/>
            <person name="Yada T."/>
            <person name="Nakamura Y."/>
            <person name="Ohara O."/>
            <person name="Isogai T."/>
            <person name="Sugano S."/>
        </authorList>
    </citation>
    <scope>PARTIAL NUCLEOTIDE SEQUENCE [LARGE SCALE MRNA] (ISOFORMS 2 AND 3)</scope>
    <source>
        <tissue>Hepatoma</tissue>
        <tissue>Teratocarcinoma</tissue>
    </source>
</reference>
<reference key="5">
    <citation type="journal article" date="2006" name="Nature">
        <title>The DNA sequence and biological annotation of human chromosome 1.</title>
        <authorList>
            <person name="Gregory S.G."/>
            <person name="Barlow K.F."/>
            <person name="McLay K.E."/>
            <person name="Kaul R."/>
            <person name="Swarbreck D."/>
            <person name="Dunham A."/>
            <person name="Scott C.E."/>
            <person name="Howe K.L."/>
            <person name="Woodfine K."/>
            <person name="Spencer C.C.A."/>
            <person name="Jones M.C."/>
            <person name="Gillson C."/>
            <person name="Searle S."/>
            <person name="Zhou Y."/>
            <person name="Kokocinski F."/>
            <person name="McDonald L."/>
            <person name="Evans R."/>
            <person name="Phillips K."/>
            <person name="Atkinson A."/>
            <person name="Cooper R."/>
            <person name="Jones C."/>
            <person name="Hall R.E."/>
            <person name="Andrews T.D."/>
            <person name="Lloyd C."/>
            <person name="Ainscough R."/>
            <person name="Almeida J.P."/>
            <person name="Ambrose K.D."/>
            <person name="Anderson F."/>
            <person name="Andrew R.W."/>
            <person name="Ashwell R.I.S."/>
            <person name="Aubin K."/>
            <person name="Babbage A.K."/>
            <person name="Bagguley C.L."/>
            <person name="Bailey J."/>
            <person name="Beasley H."/>
            <person name="Bethel G."/>
            <person name="Bird C.P."/>
            <person name="Bray-Allen S."/>
            <person name="Brown J.Y."/>
            <person name="Brown A.J."/>
            <person name="Buckley D."/>
            <person name="Burton J."/>
            <person name="Bye J."/>
            <person name="Carder C."/>
            <person name="Chapman J.C."/>
            <person name="Clark S.Y."/>
            <person name="Clarke G."/>
            <person name="Clee C."/>
            <person name="Cobley V."/>
            <person name="Collier R.E."/>
            <person name="Corby N."/>
            <person name="Coville G.J."/>
            <person name="Davies J."/>
            <person name="Deadman R."/>
            <person name="Dunn M."/>
            <person name="Earthrowl M."/>
            <person name="Ellington A.G."/>
            <person name="Errington H."/>
            <person name="Frankish A."/>
            <person name="Frankland J."/>
            <person name="French L."/>
            <person name="Garner P."/>
            <person name="Garnett J."/>
            <person name="Gay L."/>
            <person name="Ghori M.R.J."/>
            <person name="Gibson R."/>
            <person name="Gilby L.M."/>
            <person name="Gillett W."/>
            <person name="Glithero R.J."/>
            <person name="Grafham D.V."/>
            <person name="Griffiths C."/>
            <person name="Griffiths-Jones S."/>
            <person name="Grocock R."/>
            <person name="Hammond S."/>
            <person name="Harrison E.S.I."/>
            <person name="Hart E."/>
            <person name="Haugen E."/>
            <person name="Heath P.D."/>
            <person name="Holmes S."/>
            <person name="Holt K."/>
            <person name="Howden P.J."/>
            <person name="Hunt A.R."/>
            <person name="Hunt S.E."/>
            <person name="Hunter G."/>
            <person name="Isherwood J."/>
            <person name="James R."/>
            <person name="Johnson C."/>
            <person name="Johnson D."/>
            <person name="Joy A."/>
            <person name="Kay M."/>
            <person name="Kershaw J.K."/>
            <person name="Kibukawa M."/>
            <person name="Kimberley A.M."/>
            <person name="King A."/>
            <person name="Knights A.J."/>
            <person name="Lad H."/>
            <person name="Laird G."/>
            <person name="Lawlor S."/>
            <person name="Leongamornlert D.A."/>
            <person name="Lloyd D.M."/>
            <person name="Loveland J."/>
            <person name="Lovell J."/>
            <person name="Lush M.J."/>
            <person name="Lyne R."/>
            <person name="Martin S."/>
            <person name="Mashreghi-Mohammadi M."/>
            <person name="Matthews L."/>
            <person name="Matthews N.S.W."/>
            <person name="McLaren S."/>
            <person name="Milne S."/>
            <person name="Mistry S."/>
            <person name="Moore M.J.F."/>
            <person name="Nickerson T."/>
            <person name="O'Dell C.N."/>
            <person name="Oliver K."/>
            <person name="Palmeiri A."/>
            <person name="Palmer S.A."/>
            <person name="Parker A."/>
            <person name="Patel D."/>
            <person name="Pearce A.V."/>
            <person name="Peck A.I."/>
            <person name="Pelan S."/>
            <person name="Phelps K."/>
            <person name="Phillimore B.J."/>
            <person name="Plumb R."/>
            <person name="Rajan J."/>
            <person name="Raymond C."/>
            <person name="Rouse G."/>
            <person name="Saenphimmachak C."/>
            <person name="Sehra H.K."/>
            <person name="Sheridan E."/>
            <person name="Shownkeen R."/>
            <person name="Sims S."/>
            <person name="Skuce C.D."/>
            <person name="Smith M."/>
            <person name="Steward C."/>
            <person name="Subramanian S."/>
            <person name="Sycamore N."/>
            <person name="Tracey A."/>
            <person name="Tromans A."/>
            <person name="Van Helmond Z."/>
            <person name="Wall M."/>
            <person name="Wallis J.M."/>
            <person name="White S."/>
            <person name="Whitehead S.L."/>
            <person name="Wilkinson J.E."/>
            <person name="Willey D.L."/>
            <person name="Williams H."/>
            <person name="Wilming L."/>
            <person name="Wray P.W."/>
            <person name="Wu Z."/>
            <person name="Coulson A."/>
            <person name="Vaudin M."/>
            <person name="Sulston J.E."/>
            <person name="Durbin R.M."/>
            <person name="Hubbard T."/>
            <person name="Wooster R."/>
            <person name="Dunham I."/>
            <person name="Carter N.P."/>
            <person name="McVean G."/>
            <person name="Ross M.T."/>
            <person name="Harrow J."/>
            <person name="Olson M.V."/>
            <person name="Beck S."/>
            <person name="Rogers J."/>
            <person name="Bentley D.R."/>
        </authorList>
    </citation>
    <scope>NUCLEOTIDE SEQUENCE [LARGE SCALE GENOMIC DNA]</scope>
</reference>
<reference key="6">
    <citation type="journal article" date="2004" name="Genome Res.">
        <title>The status, quality, and expansion of the NIH full-length cDNA project: the Mammalian Gene Collection (MGC).</title>
        <authorList>
            <consortium name="The MGC Project Team"/>
        </authorList>
    </citation>
    <scope>NUCLEOTIDE SEQUENCE [LARGE SCALE MRNA] (ISOFORM 3)</scope>
    <scope>NUCLEOTIDE SEQUENCE [LARGE SCALE MRNA] OF 21-977 (ISOFORM 1)</scope>
    <source>
        <tissue>Melanoma</tissue>
        <tissue>Testis</tissue>
    </source>
</reference>
<reference key="7">
    <citation type="journal article" date="2005" name="J. Biol. Chem.">
        <title>Interaction of the Epstein-Barr virus mRNA export factor EB2 with human Spen proteins SHARP, OTT1, and a novel member of the family, OTT3, links Spen proteins with splicing regulation and mRNA export.</title>
        <authorList>
            <person name="Hiriart E."/>
            <person name="Gruffat H."/>
            <person name="Buisson M."/>
            <person name="Mikaelian I."/>
            <person name="Keppler S."/>
            <person name="Meresse P."/>
            <person name="Mercher T."/>
            <person name="Bernard O.A."/>
            <person name="Sergeant A."/>
            <person name="Manet E."/>
        </authorList>
    </citation>
    <scope>INTERACTION WITH EBV BSFL2/BMLF1 (MICROBIAL INFECTION)</scope>
</reference>
<reference key="8">
    <citation type="journal article" date="2006" name="Cell">
        <title>Global, in vivo, and site-specific phosphorylation dynamics in signaling networks.</title>
        <authorList>
            <person name="Olsen J.V."/>
            <person name="Blagoev B."/>
            <person name="Gnad F."/>
            <person name="Macek B."/>
            <person name="Kumar C."/>
            <person name="Mortensen P."/>
            <person name="Mann M."/>
        </authorList>
    </citation>
    <scope>PHOSPHORYLATION [LARGE SCALE ANALYSIS] AT THR-568; SER-622 AND SER-700</scope>
    <scope>IDENTIFICATION BY MASS SPECTROMETRY [LARGE SCALE ANALYSIS]</scope>
    <source>
        <tissue>Cervix carcinoma</tissue>
    </source>
</reference>
<reference key="9">
    <citation type="journal article" date="2006" name="J. Biol. Chem.">
        <title>RNA-binding motif protein 15 binds to the RNA transport element RTE and provides a direct link to the NXF1 export pathway.</title>
        <authorList>
            <person name="Lindtner S."/>
            <person name="Zolotukhin A.S."/>
            <person name="Uranishi H."/>
            <person name="Bear J."/>
            <person name="Kulkarni V."/>
            <person name="Smulevitch S."/>
            <person name="Samiotaki M."/>
            <person name="Panayotou G."/>
            <person name="Felber B.K."/>
            <person name="Pavlakis G.N."/>
        </authorList>
    </citation>
    <scope>FUNCTION</scope>
    <scope>SUBCELLULAR LOCATION</scope>
    <scope>ALTERNATIVE INITIATION (ISOFORM 4)</scope>
    <scope>RNA-BINDING</scope>
    <scope>INTERACTION WITH NXF1</scope>
</reference>
<reference key="10">
    <citation type="journal article" date="2006" name="Nat. Biotechnol.">
        <title>A probability-based approach for high-throughput protein phosphorylation analysis and site localization.</title>
        <authorList>
            <person name="Beausoleil S.A."/>
            <person name="Villen J."/>
            <person name="Gerber S.A."/>
            <person name="Rush J."/>
            <person name="Gygi S.P."/>
        </authorList>
    </citation>
    <scope>PHOSPHORYLATION [LARGE SCALE ANALYSIS] AT SER-294</scope>
    <scope>IDENTIFICATION BY MASS SPECTROMETRY [LARGE SCALE ANALYSIS]</scope>
    <source>
        <tissue>Cervix carcinoma</tissue>
    </source>
</reference>
<reference key="11">
    <citation type="journal article" date="2007" name="Science">
        <title>ATM and ATR substrate analysis reveals extensive protein networks responsive to DNA damage.</title>
        <authorList>
            <person name="Matsuoka S."/>
            <person name="Ballif B.A."/>
            <person name="Smogorzewska A."/>
            <person name="McDonald E.R. III"/>
            <person name="Hurov K.E."/>
            <person name="Luo J."/>
            <person name="Bakalarski C.E."/>
            <person name="Zhao Z."/>
            <person name="Solimini N."/>
            <person name="Lerenthal Y."/>
            <person name="Shiloh Y."/>
            <person name="Gygi S.P."/>
            <person name="Elledge S.J."/>
        </authorList>
    </citation>
    <scope>IDENTIFICATION BY MASS SPECTROMETRY [LARGE SCALE ANALYSIS]</scope>
    <source>
        <tissue>Embryonic kidney</tissue>
    </source>
</reference>
<reference key="12">
    <citation type="journal article" date="2008" name="J. Proteome Res.">
        <title>Combining protein-based IMAC, peptide-based IMAC, and MudPIT for efficient phosphoproteomic analysis.</title>
        <authorList>
            <person name="Cantin G.T."/>
            <person name="Yi W."/>
            <person name="Lu B."/>
            <person name="Park S.K."/>
            <person name="Xu T."/>
            <person name="Lee J.-D."/>
            <person name="Yates J.R. III"/>
        </authorList>
    </citation>
    <scope>PHOSPHORYLATION [LARGE SCALE ANALYSIS] AT THR-568; SER-670 AND SER-674</scope>
    <scope>IDENTIFICATION BY MASS SPECTROMETRY [LARGE SCALE ANALYSIS]</scope>
    <source>
        <tissue>Cervix carcinoma</tissue>
    </source>
</reference>
<reference key="13">
    <citation type="journal article" date="2008" name="Mol. Cell">
        <title>Kinase-selective enrichment enables quantitative phosphoproteomics of the kinome across the cell cycle.</title>
        <authorList>
            <person name="Daub H."/>
            <person name="Olsen J.V."/>
            <person name="Bairlein M."/>
            <person name="Gnad F."/>
            <person name="Oppermann F.S."/>
            <person name="Korner R."/>
            <person name="Greff Z."/>
            <person name="Keri G."/>
            <person name="Stemmann O."/>
            <person name="Mann M."/>
        </authorList>
    </citation>
    <scope>IDENTIFICATION BY MASS SPECTROMETRY [LARGE SCALE ANALYSIS]</scope>
    <source>
        <tissue>Cervix carcinoma</tissue>
    </source>
</reference>
<reference key="14">
    <citation type="journal article" date="2008" name="Proc. Natl. Acad. Sci. U.S.A.">
        <title>A quantitative atlas of mitotic phosphorylation.</title>
        <authorList>
            <person name="Dephoure N."/>
            <person name="Zhou C."/>
            <person name="Villen J."/>
            <person name="Beausoleil S.A."/>
            <person name="Bakalarski C.E."/>
            <person name="Elledge S.J."/>
            <person name="Gygi S.P."/>
        </authorList>
    </citation>
    <scope>PHOSPHORYLATION [LARGE SCALE ANALYSIS] AT SER-257; SER-259; SER-292; SER-294; THR-568; SER-670; SER-674; SER-741 AND SER-935</scope>
    <scope>IDENTIFICATION BY MASS SPECTROMETRY [LARGE SCALE ANALYSIS]</scope>
    <source>
        <tissue>Cervix carcinoma</tissue>
    </source>
</reference>
<reference key="15">
    <citation type="journal article" date="2009" name="Anal. Chem.">
        <title>Lys-N and trypsin cover complementary parts of the phosphoproteome in a refined SCX-based approach.</title>
        <authorList>
            <person name="Gauci S."/>
            <person name="Helbig A.O."/>
            <person name="Slijper M."/>
            <person name="Krijgsveld J."/>
            <person name="Heck A.J."/>
            <person name="Mohammed S."/>
        </authorList>
    </citation>
    <scope>IDENTIFICATION BY MASS SPECTROMETRY [LARGE SCALE ANALYSIS]</scope>
</reference>
<reference key="16">
    <citation type="journal article" date="2009" name="Nucleic Acids Res.">
        <title>Nuclear export factor RBM15 facilitates the access of DBP5 to mRNA.</title>
        <authorList>
            <person name="Zolotukhin A.S."/>
            <person name="Uranishi H."/>
            <person name="Lindtner S."/>
            <person name="Bear J."/>
            <person name="Pavlakis G.N."/>
            <person name="Felber B.K."/>
        </authorList>
    </citation>
    <scope>FUNCTION</scope>
    <scope>SUBCELLULAR LOCATION</scope>
</reference>
<reference key="17">
    <citation type="journal article" date="2009" name="Sci. Signal.">
        <title>Quantitative phosphoproteomic analysis of T cell receptor signaling reveals system-wide modulation of protein-protein interactions.</title>
        <authorList>
            <person name="Mayya V."/>
            <person name="Lundgren D.H."/>
            <person name="Hwang S.-I."/>
            <person name="Rezaul K."/>
            <person name="Wu L."/>
            <person name="Eng J.K."/>
            <person name="Rodionov V."/>
            <person name="Han D.K."/>
        </authorList>
    </citation>
    <scope>PHOSPHORYLATION [LARGE SCALE ANALYSIS] AT SER-670 AND SER-674</scope>
    <scope>IDENTIFICATION BY MASS SPECTROMETRY [LARGE SCALE ANALYSIS]</scope>
    <source>
        <tissue>Leukemic T-cell</tissue>
    </source>
</reference>
<reference key="18">
    <citation type="journal article" date="2009" name="Science">
        <title>Lysine acetylation targets protein complexes and co-regulates major cellular functions.</title>
        <authorList>
            <person name="Choudhary C."/>
            <person name="Kumar C."/>
            <person name="Gnad F."/>
            <person name="Nielsen M.L."/>
            <person name="Rehman M."/>
            <person name="Walther T.C."/>
            <person name="Olsen J.V."/>
            <person name="Mann M."/>
        </authorList>
    </citation>
    <scope>ACETYLATION [LARGE SCALE ANALYSIS] AT LYS-450</scope>
    <scope>IDENTIFICATION BY MASS SPECTROMETRY [LARGE SCALE ANALYSIS]</scope>
</reference>
<reference key="19">
    <citation type="journal article" date="2010" name="Sci. Signal.">
        <title>Quantitative phosphoproteomics reveals widespread full phosphorylation site occupancy during mitosis.</title>
        <authorList>
            <person name="Olsen J.V."/>
            <person name="Vermeulen M."/>
            <person name="Santamaria A."/>
            <person name="Kumar C."/>
            <person name="Miller M.L."/>
            <person name="Jensen L.J."/>
            <person name="Gnad F."/>
            <person name="Cox J."/>
            <person name="Jensen T.S."/>
            <person name="Nigg E.A."/>
            <person name="Brunak S."/>
            <person name="Mann M."/>
        </authorList>
    </citation>
    <scope>PHOSPHORYLATION [LARGE SCALE ANALYSIS] AT SER-109; SER-210; SER-257; SER-259; SER-294; SER-365; THR-568; SER-622; SER-670; SER-765 AND SER-935</scope>
    <scope>IDENTIFICATION BY MASS SPECTROMETRY [LARGE SCALE ANALYSIS]</scope>
    <source>
        <tissue>Cervix carcinoma</tissue>
    </source>
</reference>
<reference key="20">
    <citation type="journal article" date="2011" name="BMC Syst. Biol.">
        <title>Initial characterization of the human central proteome.</title>
        <authorList>
            <person name="Burkard T.R."/>
            <person name="Planyavsky M."/>
            <person name="Kaupe I."/>
            <person name="Breitwieser F.P."/>
            <person name="Buerckstuemmer T."/>
            <person name="Bennett K.L."/>
            <person name="Superti-Furga G."/>
            <person name="Colinge J."/>
        </authorList>
    </citation>
    <scope>IDENTIFICATION BY MASS SPECTROMETRY [LARGE SCALE ANALYSIS]</scope>
</reference>
<reference key="21">
    <citation type="journal article" date="2009" name="J. Biol. Chem.">
        <title>The RNA-binding motif protein 15B (RBM15B/OTT3) acts as cofactor of the nuclear export receptor NXF1.</title>
        <authorList>
            <person name="Uranishi H."/>
            <person name="Zolotukhin A.S."/>
            <person name="Lindtner S."/>
            <person name="Warming S."/>
            <person name="Zhang G.M."/>
            <person name="Bear J."/>
            <person name="Copeland N.G."/>
            <person name="Jenkins N.A."/>
            <person name="Pavlakis G.N."/>
            <person name="Felber B.K."/>
        </authorList>
    </citation>
    <scope>SUBCELLULAR LOCATION</scope>
</reference>
<reference key="22">
    <citation type="journal article" date="2011" name="Sci. Signal.">
        <title>System-wide temporal characterization of the proteome and phosphoproteome of human embryonic stem cell differentiation.</title>
        <authorList>
            <person name="Rigbolt K.T."/>
            <person name="Prokhorova T.A."/>
            <person name="Akimov V."/>
            <person name="Henningsen J."/>
            <person name="Johansen P.T."/>
            <person name="Kratchmarova I."/>
            <person name="Kassem M."/>
            <person name="Mann M."/>
            <person name="Olsen J.V."/>
            <person name="Blagoev B."/>
        </authorList>
    </citation>
    <scope>PHOSPHORYLATION [LARGE SCALE ANALYSIS] AT SER-109; SER-294; THR-568; SER-741 AND SER-765</scope>
    <scope>IDENTIFICATION BY MASS SPECTROMETRY [LARGE SCALE ANALYSIS]</scope>
</reference>
<reference key="23">
    <citation type="journal article" date="2012" name="PLoS ONE">
        <title>Rbm15-Mkl1 interacts with the Setd1b histone H3-Lys4 methyltransferase via a SPOC domain that is required for cytokine-independent proliferation.</title>
        <authorList>
            <person name="Lee J.H."/>
            <person name="Skalnik D.G."/>
        </authorList>
    </citation>
    <scope>INTERACTION WITH SETD1B</scope>
    <scope>MUTAGENESIS OF LYS-795; LYS-898 AND PHE-923</scope>
</reference>
<reference key="24">
    <citation type="journal article" date="2013" name="J. Biol. Chem.">
        <title>Identification of Wilms' tumor 1-associating protein complex and its role in alternative splicing and the cell cycle.</title>
        <authorList>
            <person name="Horiuchi K."/>
            <person name="Kawamura T."/>
            <person name="Iwanari H."/>
            <person name="Ohashi R."/>
            <person name="Naito M."/>
            <person name="Kodama T."/>
            <person name="Hamakubo T."/>
        </authorList>
    </citation>
    <scope>IDENTIFICATION IN A MACOM-LIKE COMPLEX</scope>
    <scope>SUBCELLULAR LOCATION</scope>
</reference>
<reference key="25">
    <citation type="journal article" date="2013" name="J. Proteome Res.">
        <title>Toward a comprehensive characterization of a human cancer cell phosphoproteome.</title>
        <authorList>
            <person name="Zhou H."/>
            <person name="Di Palma S."/>
            <person name="Preisinger C."/>
            <person name="Peng M."/>
            <person name="Polat A.N."/>
            <person name="Heck A.J."/>
            <person name="Mohammed S."/>
        </authorList>
    </citation>
    <scope>PHOSPHORYLATION [LARGE SCALE ANALYSIS] AT SER-179; SER-208; SER-253; SER-257; SER-259; SER-292; SER-294; THR-568; SER-622; SER-656; SER-670; SER-674; SER-700; SER-741; SER-765; SER-767; SER-781 AND SER-935</scope>
    <scope>IDENTIFICATION BY MASS SPECTROMETRY [LARGE SCALE ANALYSIS]</scope>
    <source>
        <tissue>Cervix carcinoma</tissue>
        <tissue>Erythroleukemia</tissue>
    </source>
</reference>
<reference key="26">
    <citation type="journal article" date="2014" name="J. Proteomics">
        <title>An enzyme assisted RP-RPLC approach for in-depth analysis of human liver phosphoproteome.</title>
        <authorList>
            <person name="Bian Y."/>
            <person name="Song C."/>
            <person name="Cheng K."/>
            <person name="Dong M."/>
            <person name="Wang F."/>
            <person name="Huang J."/>
            <person name="Sun D."/>
            <person name="Wang L."/>
            <person name="Ye M."/>
            <person name="Zou H."/>
        </authorList>
    </citation>
    <scope>PHOSPHORYLATION [LARGE SCALE ANALYSIS] AT SER-109; SER-257; SER-259; TYR-266; SER-292; SER-294; THR-568; SER-670; SER-674; SER-700 AND SER-741</scope>
    <scope>IDENTIFICATION BY MASS SPECTROMETRY [LARGE SCALE ANALYSIS]</scope>
    <source>
        <tissue>Liver</tissue>
    </source>
</reference>
<reference key="27">
    <citation type="journal article" date="2015" name="Elife">
        <title>Cross-talk between PRMT1-mediated methylation and ubiquitylation on RBM15 controls RNA splicing.</title>
        <authorList>
            <person name="Zhang L."/>
            <person name="Tran N.T."/>
            <person name="Su H."/>
            <person name="Wang R."/>
            <person name="Lu Y."/>
            <person name="Tang H."/>
            <person name="Aoyagi S."/>
            <person name="Guo A."/>
            <person name="Khodadadi-Jamayran A."/>
            <person name="Zhou D."/>
            <person name="Qian K."/>
            <person name="Hricik T."/>
            <person name="Cote J."/>
            <person name="Han X."/>
            <person name="Zhou W."/>
            <person name="Laha S."/>
            <person name="Abdel-Wahab O."/>
            <person name="Levine R.L."/>
            <person name="Raffel G."/>
            <person name="Liu Y."/>
            <person name="Chen D."/>
            <person name="Li H."/>
            <person name="Townes T."/>
            <person name="Wang H."/>
            <person name="Deng H."/>
            <person name="Zheng Y.G."/>
            <person name="Leslie C."/>
            <person name="Luo M."/>
            <person name="Zhao X."/>
        </authorList>
    </citation>
    <scope>FUNCTION</scope>
    <scope>METHYLATION AT ARG-578</scope>
    <scope>UBIQUITINATION</scope>
    <scope>INTERACTION WITH SF3B1</scope>
    <scope>MUTAGENESIS OF 574-ARG--ARG-578 AND ARG-578</scope>
</reference>
<reference key="28">
    <citation type="journal article" date="2016" name="Nature">
        <title>m(6)A RNA methylation promotes XIST-mediated transcriptional repression.</title>
        <authorList>
            <person name="Patil D.P."/>
            <person name="Chen C.K."/>
            <person name="Pickering B.F."/>
            <person name="Chow A."/>
            <person name="Jackson C."/>
            <person name="Guttman M."/>
            <person name="Jaffrey S.R."/>
        </authorList>
    </citation>
    <scope>FUNCTION</scope>
    <scope>RNA-BINDING</scope>
    <scope>IDENTIFICATION IN THE WMM COMPLEX</scope>
</reference>
<reference key="29">
    <citation type="journal article" date="2017" name="Nat. Struct. Mol. Biol.">
        <title>Site-specific mapping of the human SUMO proteome reveals co-modification with phosphorylation.</title>
        <authorList>
            <person name="Hendriks I.A."/>
            <person name="Lyon D."/>
            <person name="Young C."/>
            <person name="Jensen L.J."/>
            <person name="Vertegaal A.C."/>
            <person name="Nielsen M.L."/>
        </authorList>
    </citation>
    <scope>SUMOYLATION [LARGE SCALE ANALYSIS] AT LYS-246; LYS-406; LYS-420; LYS-445 AND LYS-744</scope>
    <scope>IDENTIFICATION BY MASS SPECTROMETRY [LARGE SCALE ANALYSIS]</scope>
</reference>
<evidence type="ECO:0000250" key="1">
    <source>
        <dbReference type="UniProtKB" id="Q0VBL3"/>
    </source>
</evidence>
<evidence type="ECO:0000255" key="2">
    <source>
        <dbReference type="PROSITE-ProRule" id="PRU00176"/>
    </source>
</evidence>
<evidence type="ECO:0000255" key="3">
    <source>
        <dbReference type="PROSITE-ProRule" id="PRU00249"/>
    </source>
</evidence>
<evidence type="ECO:0000256" key="4">
    <source>
        <dbReference type="SAM" id="MobiDB-lite"/>
    </source>
</evidence>
<evidence type="ECO:0000269" key="5">
    <source>
    </source>
</evidence>
<evidence type="ECO:0000269" key="6">
    <source>
    </source>
</evidence>
<evidence type="ECO:0000269" key="7">
    <source>
    </source>
</evidence>
<evidence type="ECO:0000269" key="8">
    <source>
    </source>
</evidence>
<evidence type="ECO:0000269" key="9">
    <source>
    </source>
</evidence>
<evidence type="ECO:0000269" key="10">
    <source>
    </source>
</evidence>
<evidence type="ECO:0000269" key="11">
    <source>
    </source>
</evidence>
<evidence type="ECO:0000269" key="12">
    <source>
    </source>
</evidence>
<evidence type="ECO:0000269" key="13">
    <source>
    </source>
</evidence>
<evidence type="ECO:0000269" key="14">
    <source>
    </source>
</evidence>
<evidence type="ECO:0000303" key="15">
    <source>
    </source>
</evidence>
<evidence type="ECO:0000303" key="16">
    <source>
    </source>
</evidence>
<evidence type="ECO:0000303" key="17">
    <source>
    </source>
</evidence>
<evidence type="ECO:0000305" key="18"/>
<evidence type="ECO:0000305" key="19">
    <source>
    </source>
</evidence>
<evidence type="ECO:0000312" key="20">
    <source>
        <dbReference type="HGNC" id="HGNC:14959"/>
    </source>
</evidence>
<evidence type="ECO:0007744" key="21">
    <source>
    </source>
</evidence>
<evidence type="ECO:0007744" key="22">
    <source>
    </source>
</evidence>
<evidence type="ECO:0007744" key="23">
    <source>
    </source>
</evidence>
<evidence type="ECO:0007744" key="24">
    <source>
    </source>
</evidence>
<evidence type="ECO:0007744" key="25">
    <source>
    </source>
</evidence>
<evidence type="ECO:0007744" key="26">
    <source>
    </source>
</evidence>
<evidence type="ECO:0007744" key="27">
    <source>
    </source>
</evidence>
<evidence type="ECO:0007744" key="28">
    <source>
    </source>
</evidence>
<evidence type="ECO:0007744" key="29">
    <source>
    </source>
</evidence>
<evidence type="ECO:0007744" key="30">
    <source>
    </source>
</evidence>
<evidence type="ECO:0007744" key="31">
    <source>
    </source>
</evidence>
<evidence type="ECO:0007829" key="32">
    <source>
        <dbReference type="PDB" id="7Z27"/>
    </source>
</evidence>
<protein>
    <recommendedName>
        <fullName evidence="18">RNA-binding protein 15</fullName>
    </recommendedName>
    <alternativeName>
        <fullName evidence="17">One-twenty two protein 1</fullName>
    </alternativeName>
    <alternativeName>
        <fullName evidence="15">RNA-binding motif protein 15</fullName>
    </alternativeName>
</protein>
<dbReference type="EMBL" id="AF368062">
    <property type="protein sequence ID" value="AAK54722.1"/>
    <property type="molecule type" value="mRNA"/>
</dbReference>
<dbReference type="EMBL" id="AF368063">
    <property type="protein sequence ID" value="AAK54723.1"/>
    <property type="molecule type" value="mRNA"/>
</dbReference>
<dbReference type="EMBL" id="AF368064">
    <property type="protein sequence ID" value="AAK54724.1"/>
    <property type="molecule type" value="mRNA"/>
</dbReference>
<dbReference type="EMBL" id="AF364035">
    <property type="protein sequence ID" value="AAK56920.1"/>
    <property type="status" value="ALT_TERM"/>
    <property type="molecule type" value="mRNA"/>
</dbReference>
<dbReference type="EMBL" id="AJ303089">
    <property type="protein sequence ID" value="CAC38828.1"/>
    <property type="status" value="ALT_TERM"/>
    <property type="molecule type" value="mRNA"/>
</dbReference>
<dbReference type="EMBL" id="AJ303090">
    <property type="protein sequence ID" value="CAC38829.1"/>
    <property type="status" value="ALT_TERM"/>
    <property type="molecule type" value="mRNA"/>
</dbReference>
<dbReference type="EMBL" id="AJ297259">
    <property type="protein sequence ID" value="CAC38861.1"/>
    <property type="molecule type" value="Genomic_DNA"/>
</dbReference>
<dbReference type="EMBL" id="AJ297259">
    <property type="protein sequence ID" value="CAC38862.1"/>
    <property type="molecule type" value="Genomic_DNA"/>
</dbReference>
<dbReference type="EMBL" id="AK022541">
    <property type="protein sequence ID" value="BAB14088.1"/>
    <property type="status" value="ALT_INIT"/>
    <property type="molecule type" value="mRNA"/>
</dbReference>
<dbReference type="EMBL" id="AK025596">
    <property type="protein sequence ID" value="BAB15185.1"/>
    <property type="status" value="ALT_INIT"/>
    <property type="molecule type" value="mRNA"/>
</dbReference>
<dbReference type="EMBL" id="AL355488">
    <property type="status" value="NOT_ANNOTATED_CDS"/>
    <property type="molecule type" value="Genomic_DNA"/>
</dbReference>
<dbReference type="EMBL" id="CH471122">
    <property type="protein sequence ID" value="EAW56439.1"/>
    <property type="molecule type" value="Genomic_DNA"/>
</dbReference>
<dbReference type="EMBL" id="BC006397">
    <property type="protein sequence ID" value="AAH06397.2"/>
    <property type="molecule type" value="mRNA"/>
</dbReference>
<dbReference type="EMBL" id="BC047479">
    <property type="protein sequence ID" value="AAH47479.1"/>
    <property type="molecule type" value="mRNA"/>
</dbReference>
<dbReference type="EMBL" id="BC062316">
    <property type="protein sequence ID" value="AAH62316.1"/>
    <property type="molecule type" value="mRNA"/>
</dbReference>
<dbReference type="EMBL" id="BC098140">
    <property type="protein sequence ID" value="AAH98140.1"/>
    <property type="molecule type" value="mRNA"/>
</dbReference>
<dbReference type="EMBL" id="BC103493">
    <property type="protein sequence ID" value="AAI03494.1"/>
    <property type="molecule type" value="mRNA"/>
</dbReference>
<dbReference type="EMBL" id="BC103507">
    <property type="protein sequence ID" value="AAI03508.1"/>
    <property type="molecule type" value="mRNA"/>
</dbReference>
<dbReference type="EMBL" id="BK005915">
    <property type="protein sequence ID" value="DAA05818.1"/>
    <property type="molecule type" value="mRNA"/>
</dbReference>
<dbReference type="CCDS" id="CCDS59198.1">
    <molecule id="Q96T37-3"/>
</dbReference>
<dbReference type="CCDS" id="CCDS822.1">
    <molecule id="Q96T37-1"/>
</dbReference>
<dbReference type="RefSeq" id="NP_001188474.1">
    <molecule id="Q96T37-3"/>
    <property type="nucleotide sequence ID" value="NM_001201545.2"/>
</dbReference>
<dbReference type="RefSeq" id="NP_073605.4">
    <molecule id="Q96T37-1"/>
    <property type="nucleotide sequence ID" value="NM_022768.4"/>
</dbReference>
<dbReference type="PDB" id="7Z27">
    <property type="method" value="X-ray"/>
    <property type="resolution" value="1.45 A"/>
    <property type="chains" value="A/B=775-960"/>
</dbReference>
<dbReference type="PDBsum" id="7Z27"/>
<dbReference type="SMR" id="Q96T37"/>
<dbReference type="BioGRID" id="122293">
    <property type="interactions" value="188"/>
</dbReference>
<dbReference type="FunCoup" id="Q96T37">
    <property type="interactions" value="3747"/>
</dbReference>
<dbReference type="IntAct" id="Q96T37">
    <property type="interactions" value="596"/>
</dbReference>
<dbReference type="MINT" id="Q96T37"/>
<dbReference type="STRING" id="9606.ENSP00000358799"/>
<dbReference type="GlyCosmos" id="Q96T37">
    <property type="glycosylation" value="1 site, 1 glycan"/>
</dbReference>
<dbReference type="GlyGen" id="Q96T37">
    <property type="glycosylation" value="4 sites, 1 N-linked glycan (1 site), 1 O-linked glycan (3 sites)"/>
</dbReference>
<dbReference type="iPTMnet" id="Q96T37"/>
<dbReference type="PhosphoSitePlus" id="Q96T37"/>
<dbReference type="SwissPalm" id="Q96T37"/>
<dbReference type="BioMuta" id="RBM15"/>
<dbReference type="DMDM" id="32363506"/>
<dbReference type="jPOST" id="Q96T37"/>
<dbReference type="MassIVE" id="Q96T37"/>
<dbReference type="PaxDb" id="9606-ENSP00000358799"/>
<dbReference type="PeptideAtlas" id="Q96T37"/>
<dbReference type="ProteomicsDB" id="78180">
    <molecule id="Q96T37-1"/>
</dbReference>
<dbReference type="ProteomicsDB" id="78181">
    <molecule id="Q96T37-2"/>
</dbReference>
<dbReference type="ProteomicsDB" id="78182">
    <molecule id="Q96T37-3"/>
</dbReference>
<dbReference type="Pumba" id="Q96T37"/>
<dbReference type="Antibodypedia" id="4448">
    <property type="antibodies" value="140 antibodies from 27 providers"/>
</dbReference>
<dbReference type="DNASU" id="64783"/>
<dbReference type="Ensembl" id="ENST00000369784.9">
    <molecule id="Q96T37-1"/>
    <property type="protein sequence ID" value="ENSP00000358799.3"/>
    <property type="gene ID" value="ENSG00000162775.17"/>
</dbReference>
<dbReference type="Ensembl" id="ENST00000487146.8">
    <molecule id="Q96T37-3"/>
    <property type="protein sequence ID" value="ENSP00000473552.3"/>
    <property type="gene ID" value="ENSG00000162775.17"/>
</dbReference>
<dbReference type="Ensembl" id="ENST00000602849.1">
    <molecule id="Q96T37-2"/>
    <property type="protein sequence ID" value="ENSP00000473638.1"/>
    <property type="gene ID" value="ENSG00000162775.17"/>
</dbReference>
<dbReference type="Ensembl" id="ENST00000618772.4">
    <molecule id="Q96T37-1"/>
    <property type="protein sequence ID" value="ENSP00000483133.1"/>
    <property type="gene ID" value="ENSG00000162775.17"/>
</dbReference>
<dbReference type="Ensembl" id="ENST00000652342.2">
    <molecule id="Q96T37-4"/>
    <property type="protein sequence ID" value="ENSP00000498328.1"/>
    <property type="gene ID" value="ENSG00000162775.17"/>
</dbReference>
<dbReference type="Ensembl" id="ENST00000652747.1">
    <molecule id="Q96T37-3"/>
    <property type="protein sequence ID" value="ENSP00000498634.1"/>
    <property type="gene ID" value="ENSG00000162775.17"/>
</dbReference>
<dbReference type="GeneID" id="64783"/>
<dbReference type="KEGG" id="hsa:64783"/>
<dbReference type="MANE-Select" id="ENST00000369784.9">
    <property type="protein sequence ID" value="ENSP00000358799.3"/>
    <property type="RefSeq nucleotide sequence ID" value="NM_022768.5"/>
    <property type="RefSeq protein sequence ID" value="NP_073605.4"/>
</dbReference>
<dbReference type="UCSC" id="uc001dzl.1">
    <molecule id="Q96T37-1"/>
    <property type="organism name" value="human"/>
</dbReference>
<dbReference type="AGR" id="HGNC:14959"/>
<dbReference type="CTD" id="64783"/>
<dbReference type="DisGeNET" id="64783"/>
<dbReference type="GeneCards" id="RBM15"/>
<dbReference type="HGNC" id="HGNC:14959">
    <property type="gene designation" value="RBM15"/>
</dbReference>
<dbReference type="HPA" id="ENSG00000162775">
    <property type="expression patterns" value="Tissue enhanced (bone)"/>
</dbReference>
<dbReference type="MalaCards" id="RBM15"/>
<dbReference type="MIM" id="606077">
    <property type="type" value="gene"/>
</dbReference>
<dbReference type="neXtProt" id="NX_Q96T37"/>
<dbReference type="OpenTargets" id="ENSG00000162775"/>
<dbReference type="Orphanet" id="402023">
    <property type="disease" value="Megakaryoblastic acute myeloid leukemia with t(1;22)(p13;q13)"/>
</dbReference>
<dbReference type="PharmGKB" id="PA34264"/>
<dbReference type="VEuPathDB" id="HostDB:ENSG00000162775"/>
<dbReference type="eggNOG" id="KOG0112">
    <property type="taxonomic scope" value="Eukaryota"/>
</dbReference>
<dbReference type="GeneTree" id="ENSGT00940000158161"/>
<dbReference type="InParanoid" id="Q96T37"/>
<dbReference type="OMA" id="EWPNPAI"/>
<dbReference type="OrthoDB" id="10050565at2759"/>
<dbReference type="PAN-GO" id="Q96T37">
    <property type="GO annotations" value="3 GO annotations based on evolutionary models"/>
</dbReference>
<dbReference type="PhylomeDB" id="Q96T37"/>
<dbReference type="TreeFam" id="TF315637"/>
<dbReference type="PathwayCommons" id="Q96T37"/>
<dbReference type="SignaLink" id="Q96T37"/>
<dbReference type="SIGNOR" id="Q96T37"/>
<dbReference type="BioGRID-ORCS" id="64783">
    <property type="hits" value="122 hits in 1160 CRISPR screens"/>
</dbReference>
<dbReference type="CD-CODE" id="232F8A39">
    <property type="entry name" value="P-body"/>
</dbReference>
<dbReference type="CD-CODE" id="44A42CE7">
    <property type="entry name" value="RBM15 condensate"/>
</dbReference>
<dbReference type="CD-CODE" id="804901D1">
    <property type="entry name" value="Nuclear speckle"/>
</dbReference>
<dbReference type="CD-CODE" id="DEE660B4">
    <property type="entry name" value="Stress granule"/>
</dbReference>
<dbReference type="ChiTaRS" id="RBM15">
    <property type="organism name" value="human"/>
</dbReference>
<dbReference type="GeneWiki" id="RBM15"/>
<dbReference type="GenomeRNAi" id="64783"/>
<dbReference type="Pharos" id="Q96T37">
    <property type="development level" value="Tbio"/>
</dbReference>
<dbReference type="PRO" id="PR:Q96T37"/>
<dbReference type="Proteomes" id="UP000005640">
    <property type="component" value="Chromosome 1"/>
</dbReference>
<dbReference type="RNAct" id="Q96T37">
    <property type="molecule type" value="protein"/>
</dbReference>
<dbReference type="Bgee" id="ENSG00000162775">
    <property type="expression patterns" value="Expressed in secondary oocyte and 211 other cell types or tissues"/>
</dbReference>
<dbReference type="ExpressionAtlas" id="Q96T37">
    <property type="expression patterns" value="baseline and differential"/>
</dbReference>
<dbReference type="GO" id="GO:0031965">
    <property type="term" value="C:nuclear membrane"/>
    <property type="evidence" value="ECO:0007669"/>
    <property type="project" value="UniProtKB-SubCell"/>
</dbReference>
<dbReference type="GO" id="GO:0016607">
    <property type="term" value="C:nuclear speck"/>
    <property type="evidence" value="ECO:0000314"/>
    <property type="project" value="UniProtKB"/>
</dbReference>
<dbReference type="GO" id="GO:0005654">
    <property type="term" value="C:nucleoplasm"/>
    <property type="evidence" value="ECO:0000314"/>
    <property type="project" value="HPA"/>
</dbReference>
<dbReference type="GO" id="GO:0005634">
    <property type="term" value="C:nucleus"/>
    <property type="evidence" value="ECO:0000318"/>
    <property type="project" value="GO_Central"/>
</dbReference>
<dbReference type="GO" id="GO:0036396">
    <property type="term" value="C:RNA N6-methyladenosine methyltransferase complex"/>
    <property type="evidence" value="ECO:0000314"/>
    <property type="project" value="UniProtKB"/>
</dbReference>
<dbReference type="GO" id="GO:0003729">
    <property type="term" value="F:mRNA binding"/>
    <property type="evidence" value="ECO:0000314"/>
    <property type="project" value="UniProtKB"/>
</dbReference>
<dbReference type="GO" id="GO:0003723">
    <property type="term" value="F:RNA binding"/>
    <property type="evidence" value="ECO:0000314"/>
    <property type="project" value="UniProtKB"/>
</dbReference>
<dbReference type="GO" id="GO:0001569">
    <property type="term" value="P:branching involved in blood vessel morphogenesis"/>
    <property type="evidence" value="ECO:0007669"/>
    <property type="project" value="Ensembl"/>
</dbReference>
<dbReference type="GO" id="GO:0009048">
    <property type="term" value="P:dosage compensation by inactivation of X chromosome"/>
    <property type="evidence" value="ECO:0000314"/>
    <property type="project" value="UniProtKB"/>
</dbReference>
<dbReference type="GO" id="GO:0045638">
    <property type="term" value="P:negative regulation of myeloid cell differentiation"/>
    <property type="evidence" value="ECO:0007669"/>
    <property type="project" value="Ensembl"/>
</dbReference>
<dbReference type="GO" id="GO:0060674">
    <property type="term" value="P:placenta blood vessel development"/>
    <property type="evidence" value="ECO:0007669"/>
    <property type="project" value="Ensembl"/>
</dbReference>
<dbReference type="GO" id="GO:0007221">
    <property type="term" value="P:positive regulation of transcription of Notch receptor target"/>
    <property type="evidence" value="ECO:0007669"/>
    <property type="project" value="Ensembl"/>
</dbReference>
<dbReference type="GO" id="GO:0000381">
    <property type="term" value="P:regulation of alternative mRNA splicing, via spliceosome"/>
    <property type="evidence" value="ECO:0000314"/>
    <property type="project" value="UniProtKB"/>
</dbReference>
<dbReference type="GO" id="GO:0045652">
    <property type="term" value="P:regulation of megakaryocyte differentiation"/>
    <property type="evidence" value="ECO:0000314"/>
    <property type="project" value="UniProtKB"/>
</dbReference>
<dbReference type="GO" id="GO:0001510">
    <property type="term" value="P:RNA methylation"/>
    <property type="evidence" value="ECO:0000314"/>
    <property type="project" value="UniProtKB"/>
</dbReference>
<dbReference type="GO" id="GO:0048536">
    <property type="term" value="P:spleen development"/>
    <property type="evidence" value="ECO:0007669"/>
    <property type="project" value="Ensembl"/>
</dbReference>
<dbReference type="GO" id="GO:0038163">
    <property type="term" value="P:thrombopoietin-mediated signaling pathway"/>
    <property type="evidence" value="ECO:0000250"/>
    <property type="project" value="UniProtKB"/>
</dbReference>
<dbReference type="GO" id="GO:0060412">
    <property type="term" value="P:ventricular septum morphogenesis"/>
    <property type="evidence" value="ECO:0007669"/>
    <property type="project" value="Ensembl"/>
</dbReference>
<dbReference type="CDD" id="cd12553">
    <property type="entry name" value="RRM1_RBM15"/>
    <property type="match status" value="1"/>
</dbReference>
<dbReference type="CDD" id="cd12555">
    <property type="entry name" value="RRM2_RBM15"/>
    <property type="match status" value="1"/>
</dbReference>
<dbReference type="CDD" id="cd12557">
    <property type="entry name" value="RRM3_RBM15"/>
    <property type="match status" value="1"/>
</dbReference>
<dbReference type="CDD" id="cd21549">
    <property type="entry name" value="SPOC_RBM15"/>
    <property type="match status" value="1"/>
</dbReference>
<dbReference type="FunFam" id="3.30.70.330:FF:000181">
    <property type="entry name" value="RNA binding motif protein 15"/>
    <property type="match status" value="1"/>
</dbReference>
<dbReference type="FunFam" id="3.30.70.330:FF:000195">
    <property type="entry name" value="RNA binding motif protein 15"/>
    <property type="match status" value="1"/>
</dbReference>
<dbReference type="FunFam" id="2.40.290.10:FF:000003">
    <property type="entry name" value="RNA-binding motif protein 15"/>
    <property type="match status" value="1"/>
</dbReference>
<dbReference type="FunFam" id="3.30.70.330:FF:000112">
    <property type="entry name" value="RNA-binding motif protein 15"/>
    <property type="match status" value="1"/>
</dbReference>
<dbReference type="Gene3D" id="2.40.290.10">
    <property type="match status" value="1"/>
</dbReference>
<dbReference type="Gene3D" id="3.30.70.330">
    <property type="match status" value="3"/>
</dbReference>
<dbReference type="InterPro" id="IPR012677">
    <property type="entry name" value="Nucleotide-bd_a/b_plait_sf"/>
</dbReference>
<dbReference type="InterPro" id="IPR035979">
    <property type="entry name" value="RBD_domain_sf"/>
</dbReference>
<dbReference type="InterPro" id="IPR034470">
    <property type="entry name" value="RBM15_RRM1"/>
</dbReference>
<dbReference type="InterPro" id="IPR034472">
    <property type="entry name" value="RBM15_RRM2"/>
</dbReference>
<dbReference type="InterPro" id="IPR034473">
    <property type="entry name" value="RBM15_RRM3"/>
</dbReference>
<dbReference type="InterPro" id="IPR000504">
    <property type="entry name" value="RRM_dom"/>
</dbReference>
<dbReference type="InterPro" id="IPR016194">
    <property type="entry name" value="SPOC-like_C_dom_sf"/>
</dbReference>
<dbReference type="InterPro" id="IPR012921">
    <property type="entry name" value="SPOC_C"/>
</dbReference>
<dbReference type="InterPro" id="IPR010912">
    <property type="entry name" value="SPOC_met"/>
</dbReference>
<dbReference type="PANTHER" id="PTHR23189">
    <property type="entry name" value="RNA RECOGNITION MOTIF-CONTAINING"/>
    <property type="match status" value="1"/>
</dbReference>
<dbReference type="Pfam" id="PF00076">
    <property type="entry name" value="RRM_1"/>
    <property type="match status" value="2"/>
</dbReference>
<dbReference type="Pfam" id="PF07744">
    <property type="entry name" value="SPOC"/>
    <property type="match status" value="1"/>
</dbReference>
<dbReference type="SMART" id="SM00360">
    <property type="entry name" value="RRM"/>
    <property type="match status" value="3"/>
</dbReference>
<dbReference type="SUPFAM" id="SSF54928">
    <property type="entry name" value="RNA-binding domain, RBD"/>
    <property type="match status" value="2"/>
</dbReference>
<dbReference type="SUPFAM" id="SSF100939">
    <property type="entry name" value="SPOC domain-like"/>
    <property type="match status" value="1"/>
</dbReference>
<dbReference type="PROSITE" id="PS50102">
    <property type="entry name" value="RRM"/>
    <property type="match status" value="3"/>
</dbReference>
<dbReference type="PROSITE" id="PS50917">
    <property type="entry name" value="SPOC"/>
    <property type="match status" value="1"/>
</dbReference>
<organism>
    <name type="scientific">Homo sapiens</name>
    <name type="common">Human</name>
    <dbReference type="NCBI Taxonomy" id="9606"/>
    <lineage>
        <taxon>Eukaryota</taxon>
        <taxon>Metazoa</taxon>
        <taxon>Chordata</taxon>
        <taxon>Craniata</taxon>
        <taxon>Vertebrata</taxon>
        <taxon>Euteleostomi</taxon>
        <taxon>Mammalia</taxon>
        <taxon>Eutheria</taxon>
        <taxon>Euarchontoglires</taxon>
        <taxon>Primates</taxon>
        <taxon>Haplorrhini</taxon>
        <taxon>Catarrhini</taxon>
        <taxon>Hominidae</taxon>
        <taxon>Homo</taxon>
    </lineage>
</organism>
<name>RBM15_HUMAN</name>
<keyword id="KW-0002">3D-structure</keyword>
<keyword id="KW-0007">Acetylation</keyword>
<keyword id="KW-0024">Alternative initiation</keyword>
<keyword id="KW-0025">Alternative splicing</keyword>
<keyword id="KW-0160">Chromosomal rearrangement</keyword>
<keyword id="KW-0945">Host-virus interaction</keyword>
<keyword id="KW-1017">Isopeptide bond</keyword>
<keyword id="KW-0472">Membrane</keyword>
<keyword id="KW-0488">Methylation</keyword>
<keyword id="KW-0539">Nucleus</keyword>
<keyword id="KW-0597">Phosphoprotein</keyword>
<keyword id="KW-1267">Proteomics identification</keyword>
<keyword id="KW-0656">Proto-oncogene</keyword>
<keyword id="KW-1185">Reference proteome</keyword>
<keyword id="KW-0677">Repeat</keyword>
<keyword id="KW-0694">RNA-binding</keyword>
<keyword id="KW-0832">Ubl conjugation</keyword>
<proteinExistence type="evidence at protein level"/>
<sequence>MRTAGRDPVPRRSPRWRRAVPLCETSAGRRVTQLRGDDLRRPATMKGKERSPVKAKRSRGGEDSTSRGERSKKLGGSGGSNGSSSGKTDSGGGSRRSLHLDKSSSRGGSREYDTGGGSSSSRLHSYSSPSTKNSSGGGESRSSSRGGGGESRSSGAASSAPGGGDGAEYKTLKISELGSQLSDEAVEDGLFHEFKRFGDVSVKISHLSGSGSGDERVAFVNFRRPEDARAAKHARGRLVLYDRPLKIEAVYVSRRRSRSPLDKDTYPPSASVVGASVGGHRHPPGGGGGQRSLSPGGAALGYRDYRLQQLALGRLPPPPPPPLPRDLERERDYPFYERVRPAYSLEPRVGAGAGAAPFREVDEISPEDDQRANRTLFLGNLDITVTESDLRRAFDRFGVITEVDIKRPSRGQTSTYGFLKFENLDMSHRAKLAMSGKIIIRNPIKIGYGKATPTTRLWVGGLGPWVPLAALAREFDRFGTIRTIDYRKGDSWAYIQYESLDAAHAAWTHMRGFPLGGPDRRLRVDFADTEHRYQQQYLQPLPLTHYELVTDAFGHRAPDPLRGARDRTPPLLYRDRDRDLYPDSDWVPPPPPVRERSTRTAATSVPAYEPLDSLDRRRDGWSLDRDRGDRDLPSSRDQPRKRRLPEESGGRHLDRSPESDRPRKRHCAPSPDRSPELSSSRDRYNSDNDRSSRLLLERPSPIRDRRGSLEKSQGDKRDRKNSASAERDRKHRTTAPTEGKSPLKKEDRSDGSAPSTSTASSKLKSPSQKQDGGTAPVASASPKLCLAWQGMLLLKNSNFPSNMHLLQGDLQVASSLLVEGSTGGKVAQLKITQRLRLDQPKLDEVTRRIKVAGPNGYAILLAVPGSSDSRSSSSSAASDTATSTQRPLRNLVSYLKQKQAAGVISLPVGGNKDKENTGVLHAFPPCEFSQQFLDSPAKALAKSEEDYLVMIIVRGFGFQIGVRYENKKRENLALTLL</sequence>
<accession>Q96T37</accession>
<accession>A1A693</accession>
<accession>Q3ZB86</accession>
<accession>Q4V760</accession>
<accession>Q5D058</accession>
<accession>Q5T613</accession>
<accession>Q86VW9</accession>
<accession>Q96PE4</accession>
<accession>Q96SC5</accession>
<accession>Q96SC6</accession>
<accession>Q96SC9</accession>
<accession>Q96SD0</accession>
<accession>Q96T38</accession>
<accession>Q9BRA5</accession>
<accession>Q9H6R8</accession>
<accession>Q9H9Y0</accession>
<gene>
    <name evidence="15 20" type="primary">RBM15</name>
    <name evidence="17" type="synonym">OTT</name>
    <name evidence="17" type="synonym">OTT1</name>
</gene>
<feature type="chain" id="PRO_0000081777" description="RNA-binding protein 15">
    <location>
        <begin position="1"/>
        <end position="977"/>
    </location>
</feature>
<feature type="domain" description="RRM 1" evidence="2">
    <location>
        <begin position="170"/>
        <end position="252"/>
    </location>
</feature>
<feature type="domain" description="RRM 2" evidence="2">
    <location>
        <begin position="374"/>
        <end position="451"/>
    </location>
</feature>
<feature type="domain" description="RRM 3" evidence="2">
    <location>
        <begin position="455"/>
        <end position="529"/>
    </location>
</feature>
<feature type="domain" description="SPOC" evidence="3">
    <location>
        <begin position="777"/>
        <end position="956"/>
    </location>
</feature>
<feature type="region of interest" description="Disordered" evidence="4">
    <location>
        <begin position="1"/>
        <end position="167"/>
    </location>
</feature>
<feature type="region of interest" description="Disordered" evidence="4">
    <location>
        <begin position="256"/>
        <end position="298"/>
    </location>
</feature>
<feature type="region of interest" description="Disordered" evidence="4">
    <location>
        <begin position="555"/>
        <end position="778"/>
    </location>
</feature>
<feature type="region of interest" description="Disordered" evidence="4">
    <location>
        <begin position="865"/>
        <end position="884"/>
    </location>
</feature>
<feature type="compositionally biased region" description="Basic and acidic residues" evidence="4">
    <location>
        <begin position="1"/>
        <end position="10"/>
    </location>
</feature>
<feature type="compositionally biased region" description="Basic and acidic residues" evidence="4">
    <location>
        <begin position="35"/>
        <end position="52"/>
    </location>
</feature>
<feature type="compositionally biased region" description="Basic and acidic residues" evidence="4">
    <location>
        <begin position="59"/>
        <end position="72"/>
    </location>
</feature>
<feature type="compositionally biased region" description="Basic and acidic residues" evidence="4">
    <location>
        <begin position="98"/>
        <end position="113"/>
    </location>
</feature>
<feature type="compositionally biased region" description="Low complexity" evidence="4">
    <location>
        <begin position="119"/>
        <end position="130"/>
    </location>
</feature>
<feature type="compositionally biased region" description="Gly residues" evidence="4">
    <location>
        <begin position="135"/>
        <end position="150"/>
    </location>
</feature>
<feature type="compositionally biased region" description="Low complexity" evidence="4">
    <location>
        <begin position="151"/>
        <end position="160"/>
    </location>
</feature>
<feature type="compositionally biased region" description="Basic and acidic residues" evidence="4">
    <location>
        <begin position="555"/>
        <end position="581"/>
    </location>
</feature>
<feature type="compositionally biased region" description="Basic and acidic residues" evidence="4">
    <location>
        <begin position="613"/>
        <end position="661"/>
    </location>
</feature>
<feature type="compositionally biased region" description="Basic and acidic residues" evidence="4">
    <location>
        <begin position="673"/>
        <end position="728"/>
    </location>
</feature>
<feature type="compositionally biased region" description="Basic and acidic residues" evidence="4">
    <location>
        <begin position="741"/>
        <end position="750"/>
    </location>
</feature>
<feature type="compositionally biased region" description="Polar residues" evidence="4">
    <location>
        <begin position="752"/>
        <end position="771"/>
    </location>
</feature>
<feature type="compositionally biased region" description="Low complexity" evidence="4">
    <location>
        <begin position="866"/>
        <end position="884"/>
    </location>
</feature>
<feature type="site" description="Breakpoint for translocation to form RBM15-MKL1" evidence="5 6">
    <location>
        <begin position="954"/>
        <end position="955"/>
    </location>
</feature>
<feature type="modified residue" description="Phosphoserine" evidence="27 28 30">
    <location>
        <position position="109"/>
    </location>
</feature>
<feature type="modified residue" description="Phosphoserine" evidence="29">
    <location>
        <position position="179"/>
    </location>
</feature>
<feature type="modified residue" description="Phosphoserine" evidence="29">
    <location>
        <position position="208"/>
    </location>
</feature>
<feature type="modified residue" description="Phosphoserine" evidence="27">
    <location>
        <position position="210"/>
    </location>
</feature>
<feature type="modified residue" description="Phosphoserine" evidence="29">
    <location>
        <position position="253"/>
    </location>
</feature>
<feature type="modified residue" description="Phosphoserine" evidence="24 27 29 30">
    <location>
        <position position="257"/>
    </location>
</feature>
<feature type="modified residue" description="Phosphoserine" evidence="24 27 29 30">
    <location>
        <position position="259"/>
    </location>
</feature>
<feature type="modified residue" description="Phosphotyrosine" evidence="30">
    <location>
        <position position="266"/>
    </location>
</feature>
<feature type="modified residue" description="Phosphoserine" evidence="24 29 30">
    <location>
        <position position="292"/>
    </location>
</feature>
<feature type="modified residue" description="Phosphoserine" evidence="21 24 27 28 29 30">
    <location>
        <position position="294"/>
    </location>
</feature>
<feature type="modified residue" description="Phosphoserine" evidence="27">
    <location>
        <position position="365"/>
    </location>
</feature>
<feature type="modified residue" description="N6-acetyllysine" evidence="25">
    <location>
        <position position="450"/>
    </location>
</feature>
<feature type="modified residue" description="Phosphothreonine" evidence="22 23 24 27 28 29 30">
    <location>
        <position position="568"/>
    </location>
</feature>
<feature type="modified residue" description="Asymmetric dimethylarginine; alternate; by PRMT1" evidence="13">
    <location>
        <position position="578"/>
    </location>
</feature>
<feature type="modified residue" description="Omega-N-methylarginine; alternate; by PRMT1" evidence="13">
    <location>
        <position position="578"/>
    </location>
</feature>
<feature type="modified residue" description="Phosphoserine" evidence="22 27 29">
    <location>
        <position position="622"/>
    </location>
</feature>
<feature type="modified residue" description="Phosphoserine" evidence="29">
    <location>
        <position position="656"/>
    </location>
</feature>
<feature type="modified residue" description="Phosphoserine" evidence="23 24 26 27 29 30">
    <location>
        <position position="670"/>
    </location>
</feature>
<feature type="modified residue" description="Phosphoserine" evidence="23 24 26 29 30">
    <location>
        <position position="674"/>
    </location>
</feature>
<feature type="modified residue" description="Phosphoserine" evidence="22 29 30">
    <location>
        <position position="700"/>
    </location>
</feature>
<feature type="modified residue" description="Phosphoserine" evidence="24 28 29 30">
    <location>
        <position position="741"/>
    </location>
</feature>
<feature type="modified residue" description="Phosphoserine" evidence="27 28 29">
    <location>
        <position position="765"/>
    </location>
</feature>
<feature type="modified residue" description="Phosphoserine" evidence="29">
    <location>
        <position position="767"/>
    </location>
</feature>
<feature type="modified residue" description="Phosphoserine" evidence="29">
    <location>
        <position position="781"/>
    </location>
</feature>
<feature type="modified residue" description="Phosphoserine" evidence="24 27 29">
    <location>
        <position position="935"/>
    </location>
</feature>
<feature type="cross-link" description="Glycyl lysine isopeptide (Lys-Gly) (interchain with G-Cter in SUMO2)" evidence="31">
    <location>
        <position position="246"/>
    </location>
</feature>
<feature type="cross-link" description="Glycyl lysine isopeptide (Lys-Gly) (interchain with G-Cter in SUMO2)" evidence="31">
    <location>
        <position position="406"/>
    </location>
</feature>
<feature type="cross-link" description="Glycyl lysine isopeptide (Lys-Gly) (interchain with G-Cter in SUMO2)" evidence="31">
    <location>
        <position position="420"/>
    </location>
</feature>
<feature type="cross-link" description="Glycyl lysine isopeptide (Lys-Gly) (interchain with G-Cter in SUMO2)" evidence="31">
    <location>
        <position position="445"/>
    </location>
</feature>
<feature type="cross-link" description="Glycyl lysine isopeptide (Lys-Gly) (interchain with G-Cter in SUMO2)" evidence="31">
    <location>
        <position position="744"/>
    </location>
</feature>
<feature type="splice variant" id="VSP_053877" description="In isoform 4." evidence="18">
    <location>
        <begin position="1"/>
        <end position="44"/>
    </location>
</feature>
<feature type="splice variant" id="VSP_005812" description="In isoform 3." evidence="15 16">
    <original>GFGFQIGVRYENKKRENLALTLL</original>
    <variation>AKLVEQRMKIWNSKL</variation>
    <location>
        <begin position="955"/>
        <end position="977"/>
    </location>
</feature>
<feature type="splice variant" id="VSP_005811" description="In isoform 2 and isoform 4." evidence="15">
    <original>FGFQIGVRYENKKRENLALTLL</original>
    <variation>AS</variation>
    <location>
        <begin position="956"/>
        <end position="977"/>
    </location>
</feature>
<feature type="mutagenesis site" description="Decreased, but not abolished methylation by PRMT1." evidence="13">
    <original>RDRDR</original>
    <variation>KDKDK</variation>
    <location>
        <begin position="574"/>
        <end position="578"/>
    </location>
</feature>
<feature type="mutagenesis site" description="Decreased methylation by PRMT1, leading to decreased ubiquitination by CNOT4." evidence="13">
    <original>R</original>
    <variation>K</variation>
    <location>
        <position position="578"/>
    </location>
</feature>
<feature type="mutagenesis site" description="Disrupts interaction with SETD1B." evidence="11">
    <original>K</original>
    <variation>A</variation>
    <location>
        <position position="795"/>
    </location>
</feature>
<feature type="mutagenesis site" description="Disrupts interaction with SETD1B." evidence="11">
    <original>K</original>
    <variation>A</variation>
    <location>
        <position position="898"/>
    </location>
</feature>
<feature type="mutagenesis site" description="Disrupts interaction with SETD1B." evidence="11">
    <original>F</original>
    <variation>A</variation>
    <location>
        <position position="923"/>
    </location>
</feature>
<feature type="sequence conflict" description="In Ref. 1; AAK54722/AAK54723/AAK54724 and 3; BAB14088." evidence="18" ref="1 3">
    <original>H</original>
    <variation>L</variation>
    <location>
        <position position="99"/>
    </location>
</feature>
<feature type="sequence conflict" description="In Ref. 6; AAI03494." evidence="18" ref="6">
    <original>D</original>
    <variation>N</variation>
    <location>
        <position position="227"/>
    </location>
</feature>
<feature type="sequence conflict" description="In Ref. 1; AAK54722/AAK54723/AAK54724 and 3; BAB14088." evidence="18" ref="1 3">
    <original>R</original>
    <variation>G</variation>
    <location>
        <position position="705"/>
    </location>
</feature>
<feature type="strand" evidence="32">
    <location>
        <begin position="786"/>
        <end position="794"/>
    </location>
</feature>
<feature type="strand" evidence="32">
    <location>
        <begin position="797"/>
        <end position="808"/>
    </location>
</feature>
<feature type="helix" evidence="32">
    <location>
        <begin position="810"/>
        <end position="816"/>
    </location>
</feature>
<feature type="strand" evidence="32">
    <location>
        <begin position="817"/>
        <end position="819"/>
    </location>
</feature>
<feature type="turn" evidence="32">
    <location>
        <begin position="820"/>
        <end position="822"/>
    </location>
</feature>
<feature type="strand" evidence="32">
    <location>
        <begin position="827"/>
        <end position="831"/>
    </location>
</feature>
<feature type="strand" evidence="32">
    <location>
        <begin position="833"/>
        <end position="836"/>
    </location>
</feature>
<feature type="helix" evidence="32">
    <location>
        <begin position="839"/>
        <end position="852"/>
    </location>
</feature>
<feature type="strand" evidence="32">
    <location>
        <begin position="856"/>
        <end position="864"/>
    </location>
</feature>
<feature type="helix" evidence="32">
    <location>
        <begin position="888"/>
        <end position="898"/>
    </location>
</feature>
<feature type="strand" evidence="32">
    <location>
        <begin position="900"/>
        <end position="908"/>
    </location>
</feature>
<feature type="helix" evidence="32">
    <location>
        <begin position="914"/>
        <end position="916"/>
    </location>
</feature>
<feature type="strand" evidence="32">
    <location>
        <begin position="918"/>
        <end position="923"/>
    </location>
</feature>
<feature type="helix" evidence="32">
    <location>
        <begin position="927"/>
        <end position="930"/>
    </location>
</feature>
<feature type="helix" evidence="32">
    <location>
        <begin position="935"/>
        <end position="940"/>
    </location>
</feature>
<feature type="strand" evidence="32">
    <location>
        <begin position="948"/>
        <end position="958"/>
    </location>
</feature>
<comment type="function">
    <text evidence="1 8 10 13 14 19">RNA-binding protein that acts as a key regulator of N6-methyladenosine (m6A) methylation of RNAs, thereby regulating different processes, such as hematopoietic cell homeostasis, alternative splicing of mRNAs and X chromosome inactivation mediated by Xist RNA (PubMed:27602518). Associated component of the WMM complex, a complex that mediates N6-methyladenosine (m6A) methylation of RNAs, a modification that plays a role in the efficiency of mRNA splicing and RNA processing (By similarity). Plays a key role in m6A methylation, possibly by binding target RNAs and recruiting the WMM complex (PubMed:27602518). Involved in random X inactivation mediated by Xist RNA: acts by binding Xist RNA and recruiting the WMM complex, which mediates m6A methylation, leading to target YTHDC1 reader on Xist RNA and promoting transcription repression activity of Xist (PubMed:27602518). Required for the development of multiple tissues, such as the maintenance of the homeostasis of long-term hematopoietic stem cells and for megakaryocyte (MK) and B-cell differentiation (By similarity). Regulates megakaryocyte differentiation by regulating alternative splicing of genes important for megakaryocyte differentiation; probably regulates alternative splicing via m6A regulation (PubMed:26575292). Required for placental vascular branching morphogenesis and embryonic development of the heart and spleen (By similarity). Acts as a regulator of thrombopoietin response in hematopoietic stem cells by regulating alternative splicing of MPL (By similarity). May also function as an mRNA export factor, stimulating export and expression of RTE-containing mRNAs which are present in many retrotransposons that require to be exported prior to splicing (PubMed:17001072, PubMed:19786495). High affinity binding of pre-mRNA to RBM15 may allow targeting of the mRNP to the export helicase DBP5 in a manner that is independent of splicing-mediated NXF1 deposition, resulting in export prior to splicing (PubMed:17001072, PubMed:19786495). May be implicated in HOX gene regulation (PubMed:11344311).</text>
</comment>
<comment type="subunit">
    <text evidence="1 8 11 12 13 14">Component of the WMM complex, a N6-methyltransferase complex composed of a catalytic subcomplex, named MAC, and of an associated subcomplex, named MACOM (PubMed:27602518). The MAC subcomplex is composed of METTL3 and METTL14 (PubMed:27602518). The MACOM subcomplex is composed of WTAP, ZC3H13, CBLL1/HAKAI, VIRMA, and, in some cases of RBM15 (RBM15 or RBM15B) (PubMed:27602518). Also a component of a MACOM-like complex, named WTAP complex, composed of WTAP, ZC3H13, CBLL1, VIRMA, RBM15, BCLAF1 and THRAP3 (PubMed:24100041). Interacts with RBPJ (By similarity). Interacts (via SPOC domain) with SETD1B (PubMed:22927943). Interacts with NXF1, the interaction is required to promote mRNA export (PubMed:17001072). Interacts with SF3B1 (PubMed:26575292).</text>
</comment>
<comment type="subunit">
    <text evidence="7">(Microbial infection) Interacts with Epstein-Barr virus BSFL2/BMLF1.</text>
</comment>
<comment type="interaction">
    <interactant intactId="EBI-2514922">
        <id>Q96T37</id>
    </interactant>
    <interactant intactId="EBI-739580">
        <id>Q13137</id>
        <label>CALCOCO2</label>
    </interactant>
    <organismsDiffer>false</organismsDiffer>
    <experiments>3</experiments>
</comment>
<comment type="interaction">
    <interactant intactId="EBI-2514922">
        <id>Q96T37</id>
    </interactant>
    <interactant intactId="EBI-744115">
        <id>Q9C0F1</id>
        <label>CEP44</label>
    </interactant>
    <organismsDiffer>false</organismsDiffer>
    <experiments>3</experiments>
</comment>
<comment type="interaction">
    <interactant intactId="EBI-2514922">
        <id>Q96T37</id>
    </interactant>
    <interactant intactId="EBI-746012">
        <id>Q92841</id>
        <label>DDX17</label>
    </interactant>
    <organismsDiffer>false</organismsDiffer>
    <experiments>5</experiments>
</comment>
<comment type="interaction">
    <interactant intactId="EBI-2514922">
        <id>Q96T37</id>
    </interactant>
    <interactant intactId="EBI-741037">
        <id>Q9BRK4</id>
        <label>LZTS2</label>
    </interactant>
    <organismsDiffer>false</organismsDiffer>
    <experiments>3</experiments>
</comment>
<comment type="interaction">
    <interactant intactId="EBI-2514922">
        <id>Q96T37</id>
    </interactant>
    <interactant intactId="EBI-741200">
        <id>Q8IVL1</id>
        <label>NAV2</label>
    </interactant>
    <organismsDiffer>false</organismsDiffer>
    <experiments>3</experiments>
</comment>
<comment type="interaction">
    <interactant intactId="EBI-12041043">
        <id>Q96T37-3</id>
    </interactant>
    <interactant intactId="EBI-11743294">
        <id>Q8IZP0-5</id>
        <label>ABI1</label>
    </interactant>
    <organismsDiffer>false</organismsDiffer>
    <experiments>3</experiments>
</comment>
<comment type="interaction">
    <interactant intactId="EBI-12041043">
        <id>Q96T37-3</id>
    </interactant>
    <interactant intactId="EBI-947459">
        <id>Q9H2G4</id>
        <label>TSPYL2</label>
    </interactant>
    <organismsDiffer>false</organismsDiffer>
    <experiments>3</experiments>
</comment>
<comment type="subcellular location">
    <subcellularLocation>
        <location evidence="9 12">Nucleus speckle</location>
    </subcellularLocation>
    <subcellularLocation>
        <location evidence="8 10 12">Nucleus</location>
        <location evidence="8 10 12">Nucleoplasm</location>
    </subcellularLocation>
    <subcellularLocation>
        <location evidence="9">Nucleus envelope</location>
    </subcellularLocation>
    <subcellularLocation>
        <location evidence="10">Nucleus membrane</location>
        <topology evidence="10">Peripheral membrane protein</topology>
    </subcellularLocation>
    <text evidence="10">Colocalizes at the nuclear pore with DBP5 and NXF1.</text>
</comment>
<comment type="alternative products">
    <event type="alternative splicing"/>
    <event type="alternative initiation"/>
    <isoform>
        <id>Q96T37-1</id>
        <name>1</name>
        <name>RBM15s+ae</name>
        <sequence type="displayed"/>
    </isoform>
    <isoform>
        <id>Q96T37-2</id>
        <name>2</name>
        <name>RBM15L</name>
        <sequence type="described" ref="VSP_005811"/>
    </isoform>
    <isoform>
        <id>Q96T37-3</id>
        <name>3</name>
        <name>RBM15S</name>
        <sequence type="described" ref="VSP_005812"/>
    </isoform>
    <isoform>
        <id>Q96T37-4</id>
        <name>4</name>
        <sequence type="described" ref="VSP_053877 VSP_005811"/>
    </isoform>
</comment>
<comment type="PTM">
    <text evidence="13">Methylated at Arg-578 by PRMT1, leading to promote ubiquitination by CNOT4 and subsequent degradation by the proteasome.</text>
</comment>
<comment type="PTM">
    <text evidence="13">Ubiquitinated by CNOT4 following methylation at Arg-578 by PRMT1.</text>
</comment>
<comment type="disease">
    <text evidence="5 6">A chromosomal aberration involving RBM15 may be a cause of acute megakaryoblastic leukemia. Translocation t(1;22)(p13;q13) with MKL1. Although both reciprocal fusion transcripts are detected in acute megakaryoblastic leukemia (AMKL, FAB-M7), the RBM15-MKL1 chimeric protein has all the putative functional domains encoded by each gene and is the candidate oncogene.</text>
</comment>
<comment type="miscellaneous">
    <molecule>Isoform 4</molecule>
    <text evidence="18">Produced by alternative initiation of isoform 2.</text>
</comment>
<comment type="similarity">
    <text evidence="18">Belongs to the RRM Spen family.</text>
</comment>
<comment type="sequence caution" evidence="18">
    <conflict type="erroneous initiation">
        <sequence resource="EMBL-CDS" id="BAB14088"/>
    </conflict>
    <text>Truncated N-terminus.</text>
</comment>
<comment type="sequence caution" evidence="18">
    <conflict type="erroneous initiation">
        <sequence resource="EMBL-CDS" id="BAB15185"/>
    </conflict>
    <text>Truncated N-terminus.</text>
</comment>
<comment type="online information" name="Atlas of Genetics and Cytogenetics in Oncology and Haematology">
    <link uri="https://atlasgeneticsoncology.org/gene/175/OTT"/>
</comment>